<evidence type="ECO:0000255" key="1">
    <source>
        <dbReference type="HAMAP-Rule" id="MF_01702"/>
    </source>
</evidence>
<dbReference type="EC" id="7.3.2.1" evidence="1"/>
<dbReference type="EMBL" id="CP000124">
    <property type="protein sequence ID" value="ABA48752.1"/>
    <property type="molecule type" value="Genomic_DNA"/>
</dbReference>
<dbReference type="RefSeq" id="WP_004193614.1">
    <property type="nucleotide sequence ID" value="NC_007434.1"/>
</dbReference>
<dbReference type="SMR" id="Q3JTS8"/>
<dbReference type="EnsemblBacteria" id="ABA48752">
    <property type="protein sequence ID" value="ABA48752"/>
    <property type="gene ID" value="BURPS1710b_1621"/>
</dbReference>
<dbReference type="GeneID" id="93059861"/>
<dbReference type="KEGG" id="bpm:BURPS1710b_1621"/>
<dbReference type="HOGENOM" id="CLU_000604_1_22_4"/>
<dbReference type="Proteomes" id="UP000002700">
    <property type="component" value="Chromosome I"/>
</dbReference>
<dbReference type="GO" id="GO:0005886">
    <property type="term" value="C:plasma membrane"/>
    <property type="evidence" value="ECO:0007669"/>
    <property type="project" value="UniProtKB-SubCell"/>
</dbReference>
<dbReference type="GO" id="GO:0005524">
    <property type="term" value="F:ATP binding"/>
    <property type="evidence" value="ECO:0007669"/>
    <property type="project" value="UniProtKB-KW"/>
</dbReference>
<dbReference type="GO" id="GO:0016887">
    <property type="term" value="F:ATP hydrolysis activity"/>
    <property type="evidence" value="ECO:0007669"/>
    <property type="project" value="InterPro"/>
</dbReference>
<dbReference type="GO" id="GO:0015415">
    <property type="term" value="F:ATPase-coupled phosphate ion transmembrane transporter activity"/>
    <property type="evidence" value="ECO:0007669"/>
    <property type="project" value="UniProtKB-EC"/>
</dbReference>
<dbReference type="GO" id="GO:0035435">
    <property type="term" value="P:phosphate ion transmembrane transport"/>
    <property type="evidence" value="ECO:0007669"/>
    <property type="project" value="InterPro"/>
</dbReference>
<dbReference type="CDD" id="cd03260">
    <property type="entry name" value="ABC_PstB_phosphate_transporter"/>
    <property type="match status" value="1"/>
</dbReference>
<dbReference type="FunFam" id="3.40.50.300:FF:000132">
    <property type="entry name" value="Phosphate import ATP-binding protein PstB"/>
    <property type="match status" value="1"/>
</dbReference>
<dbReference type="Gene3D" id="3.40.50.300">
    <property type="entry name" value="P-loop containing nucleotide triphosphate hydrolases"/>
    <property type="match status" value="1"/>
</dbReference>
<dbReference type="InterPro" id="IPR003593">
    <property type="entry name" value="AAA+_ATPase"/>
</dbReference>
<dbReference type="InterPro" id="IPR003439">
    <property type="entry name" value="ABC_transporter-like_ATP-bd"/>
</dbReference>
<dbReference type="InterPro" id="IPR017871">
    <property type="entry name" value="ABC_transporter-like_CS"/>
</dbReference>
<dbReference type="InterPro" id="IPR027417">
    <property type="entry name" value="P-loop_NTPase"/>
</dbReference>
<dbReference type="InterPro" id="IPR005670">
    <property type="entry name" value="PstB-like"/>
</dbReference>
<dbReference type="NCBIfam" id="TIGR00972">
    <property type="entry name" value="3a0107s01c2"/>
    <property type="match status" value="1"/>
</dbReference>
<dbReference type="PANTHER" id="PTHR43423">
    <property type="entry name" value="ABC TRANSPORTER I FAMILY MEMBER 17"/>
    <property type="match status" value="1"/>
</dbReference>
<dbReference type="PANTHER" id="PTHR43423:SF3">
    <property type="entry name" value="PHOSPHATE IMPORT ATP-BINDING PROTEIN PSTB"/>
    <property type="match status" value="1"/>
</dbReference>
<dbReference type="Pfam" id="PF00005">
    <property type="entry name" value="ABC_tran"/>
    <property type="match status" value="1"/>
</dbReference>
<dbReference type="SMART" id="SM00382">
    <property type="entry name" value="AAA"/>
    <property type="match status" value="1"/>
</dbReference>
<dbReference type="SUPFAM" id="SSF52540">
    <property type="entry name" value="P-loop containing nucleoside triphosphate hydrolases"/>
    <property type="match status" value="1"/>
</dbReference>
<dbReference type="PROSITE" id="PS00211">
    <property type="entry name" value="ABC_TRANSPORTER_1"/>
    <property type="match status" value="1"/>
</dbReference>
<dbReference type="PROSITE" id="PS50893">
    <property type="entry name" value="ABC_TRANSPORTER_2"/>
    <property type="match status" value="1"/>
</dbReference>
<dbReference type="PROSITE" id="PS51238">
    <property type="entry name" value="PSTB"/>
    <property type="match status" value="1"/>
</dbReference>
<accession>Q3JTS8</accession>
<reference key="1">
    <citation type="journal article" date="2010" name="Genome Biol. Evol.">
        <title>Continuing evolution of Burkholderia mallei through genome reduction and large-scale rearrangements.</title>
        <authorList>
            <person name="Losada L."/>
            <person name="Ronning C.M."/>
            <person name="DeShazer D."/>
            <person name="Woods D."/>
            <person name="Fedorova N."/>
            <person name="Kim H.S."/>
            <person name="Shabalina S.A."/>
            <person name="Pearson T.R."/>
            <person name="Brinkac L."/>
            <person name="Tan P."/>
            <person name="Nandi T."/>
            <person name="Crabtree J."/>
            <person name="Badger J."/>
            <person name="Beckstrom-Sternberg S."/>
            <person name="Saqib M."/>
            <person name="Schutzer S.E."/>
            <person name="Keim P."/>
            <person name="Nierman W.C."/>
        </authorList>
    </citation>
    <scope>NUCLEOTIDE SEQUENCE [LARGE SCALE GENOMIC DNA]</scope>
    <source>
        <strain>1710b</strain>
    </source>
</reference>
<organism>
    <name type="scientific">Burkholderia pseudomallei (strain 1710b)</name>
    <dbReference type="NCBI Taxonomy" id="320372"/>
    <lineage>
        <taxon>Bacteria</taxon>
        <taxon>Pseudomonadati</taxon>
        <taxon>Pseudomonadota</taxon>
        <taxon>Betaproteobacteria</taxon>
        <taxon>Burkholderiales</taxon>
        <taxon>Burkholderiaceae</taxon>
        <taxon>Burkholderia</taxon>
        <taxon>pseudomallei group</taxon>
    </lineage>
</organism>
<name>PSTB_BURP1</name>
<protein>
    <recommendedName>
        <fullName evidence="1">Phosphate import ATP-binding protein PstB</fullName>
        <ecNumber evidence="1">7.3.2.1</ecNumber>
    </recommendedName>
    <alternativeName>
        <fullName evidence="1">ABC phosphate transporter</fullName>
    </alternativeName>
    <alternativeName>
        <fullName evidence="1">Phosphate-transporting ATPase</fullName>
    </alternativeName>
</protein>
<sequence>MNMAESHLDPSKLATGPAGFGAAAGQRPLAPLNAKIEVKNLNFFYNQFHALKNINLSIPEGKVTAFIGPSGCGKSTLLRTFNKMYALYPEQRAEGEIVMDGENLLQSKLDISLLRARIGMVFQKPTPFPMSIYDNIAFGVKMFERLTRSEMDDRVEWALTKAALWNEVKDKLSQSGYGLSGGQQQRLCIARGIAIRPEVLLLDEPCSALDPISTGRIEELIAELKSDYTVVIVTHNMQQAARCSDYTAYMYLGELIEFGETEKIFIKPARKETEDYITGRFG</sequence>
<feature type="chain" id="PRO_0000272429" description="Phosphate import ATP-binding protein PstB">
    <location>
        <begin position="1"/>
        <end position="282"/>
    </location>
</feature>
<feature type="domain" description="ABC transporter" evidence="1">
    <location>
        <begin position="36"/>
        <end position="277"/>
    </location>
</feature>
<feature type="binding site" evidence="1">
    <location>
        <begin position="68"/>
        <end position="75"/>
    </location>
    <ligand>
        <name>ATP</name>
        <dbReference type="ChEBI" id="CHEBI:30616"/>
    </ligand>
</feature>
<keyword id="KW-0067">ATP-binding</keyword>
<keyword id="KW-0997">Cell inner membrane</keyword>
<keyword id="KW-1003">Cell membrane</keyword>
<keyword id="KW-0472">Membrane</keyword>
<keyword id="KW-0547">Nucleotide-binding</keyword>
<keyword id="KW-0592">Phosphate transport</keyword>
<keyword id="KW-1278">Translocase</keyword>
<keyword id="KW-0813">Transport</keyword>
<proteinExistence type="inferred from homology"/>
<comment type="function">
    <text evidence="1">Part of the ABC transporter complex PstSACB involved in phosphate import. Responsible for energy coupling to the transport system.</text>
</comment>
<comment type="catalytic activity">
    <reaction evidence="1">
        <text>phosphate(out) + ATP + H2O = ADP + 2 phosphate(in) + H(+)</text>
        <dbReference type="Rhea" id="RHEA:24440"/>
        <dbReference type="ChEBI" id="CHEBI:15377"/>
        <dbReference type="ChEBI" id="CHEBI:15378"/>
        <dbReference type="ChEBI" id="CHEBI:30616"/>
        <dbReference type="ChEBI" id="CHEBI:43474"/>
        <dbReference type="ChEBI" id="CHEBI:456216"/>
        <dbReference type="EC" id="7.3.2.1"/>
    </reaction>
</comment>
<comment type="subunit">
    <text evidence="1">The complex is composed of two ATP-binding proteins (PstB), two transmembrane proteins (PstC and PstA) and a solute-binding protein (PstS).</text>
</comment>
<comment type="subcellular location">
    <subcellularLocation>
        <location evidence="1">Cell inner membrane</location>
        <topology evidence="1">Peripheral membrane protein</topology>
    </subcellularLocation>
</comment>
<comment type="similarity">
    <text evidence="1">Belongs to the ABC transporter superfamily. Phosphate importer (TC 3.A.1.7) family.</text>
</comment>
<gene>
    <name evidence="1" type="primary">pstB</name>
    <name type="ordered locus">BURPS1710b_1621</name>
</gene>